<accession>Q9TDL5</accession>
<reference key="1">
    <citation type="journal article" date="1999" name="Mar. Mamm. Sci.">
        <title>Phylogenetic relationships among the delphinid cetaceans based on full cytochrome b sequences.</title>
        <authorList>
            <person name="LeDuc R.G."/>
            <person name="Perrin W.F."/>
            <person name="Dizon A.E."/>
        </authorList>
    </citation>
    <scope>NUCLEOTIDE SEQUENCE [GENOMIC DNA]</scope>
</reference>
<comment type="function">
    <text evidence="2">Component of the ubiquinol-cytochrome c reductase complex (complex III or cytochrome b-c1 complex) that is part of the mitochondrial respiratory chain. The b-c1 complex mediates electron transfer from ubiquinol to cytochrome c. Contributes to the generation of a proton gradient across the mitochondrial membrane that is then used for ATP synthesis.</text>
</comment>
<comment type="cofactor">
    <cofactor evidence="2">
        <name>heme b</name>
        <dbReference type="ChEBI" id="CHEBI:60344"/>
    </cofactor>
    <text evidence="2">Binds 2 heme b groups non-covalently.</text>
</comment>
<comment type="subunit">
    <text evidence="2">The cytochrome bc1 complex contains 11 subunits: 3 respiratory subunits (MT-CYB, CYC1 and UQCRFS1), 2 core proteins (UQCRC1 and UQCRC2) and 6 low-molecular weight proteins (UQCRH/QCR6, UQCRB/QCR7, UQCRQ/QCR8, UQCR10/QCR9, UQCR11/QCR10 and a cleavage product of UQCRFS1). This cytochrome bc1 complex then forms a dimer.</text>
</comment>
<comment type="subcellular location">
    <subcellularLocation>
        <location evidence="2">Mitochondrion inner membrane</location>
        <topology evidence="2">Multi-pass membrane protein</topology>
    </subcellularLocation>
</comment>
<comment type="miscellaneous">
    <text evidence="1">Heme 1 (or BL or b562) is low-potential and absorbs at about 562 nm, and heme 2 (or BH or b566) is high-potential and absorbs at about 566 nm.</text>
</comment>
<comment type="similarity">
    <text evidence="3 4">Belongs to the cytochrome b family.</text>
</comment>
<comment type="caution">
    <text evidence="2">The full-length protein contains only eight transmembrane helices, not nine as predicted by bioinformatics tools.</text>
</comment>
<name>CYB_CEPHA</name>
<dbReference type="EMBL" id="AF084070">
    <property type="protein sequence ID" value="AAD54447.1"/>
    <property type="molecule type" value="Genomic_DNA"/>
</dbReference>
<dbReference type="RefSeq" id="YP_007626016.1">
    <property type="nucleotide sequence ID" value="NC_020696.1"/>
</dbReference>
<dbReference type="SMR" id="Q9TDL5"/>
<dbReference type="GeneID" id="14843273"/>
<dbReference type="CTD" id="4519"/>
<dbReference type="GO" id="GO:0005743">
    <property type="term" value="C:mitochondrial inner membrane"/>
    <property type="evidence" value="ECO:0007669"/>
    <property type="project" value="UniProtKB-SubCell"/>
</dbReference>
<dbReference type="GO" id="GO:0045275">
    <property type="term" value="C:respiratory chain complex III"/>
    <property type="evidence" value="ECO:0007669"/>
    <property type="project" value="InterPro"/>
</dbReference>
<dbReference type="GO" id="GO:0046872">
    <property type="term" value="F:metal ion binding"/>
    <property type="evidence" value="ECO:0007669"/>
    <property type="project" value="UniProtKB-KW"/>
</dbReference>
<dbReference type="GO" id="GO:0008121">
    <property type="term" value="F:ubiquinol-cytochrome-c reductase activity"/>
    <property type="evidence" value="ECO:0007669"/>
    <property type="project" value="InterPro"/>
</dbReference>
<dbReference type="GO" id="GO:0006122">
    <property type="term" value="P:mitochondrial electron transport, ubiquinol to cytochrome c"/>
    <property type="evidence" value="ECO:0007669"/>
    <property type="project" value="TreeGrafter"/>
</dbReference>
<dbReference type="CDD" id="cd00290">
    <property type="entry name" value="cytochrome_b_C"/>
    <property type="match status" value="1"/>
</dbReference>
<dbReference type="CDD" id="cd00284">
    <property type="entry name" value="Cytochrome_b_N"/>
    <property type="match status" value="1"/>
</dbReference>
<dbReference type="FunFam" id="1.20.810.10:FF:000002">
    <property type="entry name" value="Cytochrome b"/>
    <property type="match status" value="1"/>
</dbReference>
<dbReference type="Gene3D" id="1.20.810.10">
    <property type="entry name" value="Cytochrome Bc1 Complex, Chain C"/>
    <property type="match status" value="1"/>
</dbReference>
<dbReference type="InterPro" id="IPR005798">
    <property type="entry name" value="Cyt_b/b6_C"/>
</dbReference>
<dbReference type="InterPro" id="IPR036150">
    <property type="entry name" value="Cyt_b/b6_C_sf"/>
</dbReference>
<dbReference type="InterPro" id="IPR005797">
    <property type="entry name" value="Cyt_b/b6_N"/>
</dbReference>
<dbReference type="InterPro" id="IPR027387">
    <property type="entry name" value="Cytb/b6-like_sf"/>
</dbReference>
<dbReference type="InterPro" id="IPR030689">
    <property type="entry name" value="Cytochrome_b"/>
</dbReference>
<dbReference type="InterPro" id="IPR048260">
    <property type="entry name" value="Cytochrome_b_C_euk/bac"/>
</dbReference>
<dbReference type="InterPro" id="IPR048259">
    <property type="entry name" value="Cytochrome_b_N_euk/bac"/>
</dbReference>
<dbReference type="InterPro" id="IPR016174">
    <property type="entry name" value="Di-haem_cyt_TM"/>
</dbReference>
<dbReference type="PANTHER" id="PTHR19271">
    <property type="entry name" value="CYTOCHROME B"/>
    <property type="match status" value="1"/>
</dbReference>
<dbReference type="PANTHER" id="PTHR19271:SF16">
    <property type="entry name" value="CYTOCHROME B"/>
    <property type="match status" value="1"/>
</dbReference>
<dbReference type="Pfam" id="PF00032">
    <property type="entry name" value="Cytochrom_B_C"/>
    <property type="match status" value="1"/>
</dbReference>
<dbReference type="Pfam" id="PF00033">
    <property type="entry name" value="Cytochrome_B"/>
    <property type="match status" value="1"/>
</dbReference>
<dbReference type="PIRSF" id="PIRSF038885">
    <property type="entry name" value="COB"/>
    <property type="match status" value="1"/>
</dbReference>
<dbReference type="SUPFAM" id="SSF81648">
    <property type="entry name" value="a domain/subunit of cytochrome bc1 complex (Ubiquinol-cytochrome c reductase)"/>
    <property type="match status" value="1"/>
</dbReference>
<dbReference type="SUPFAM" id="SSF81342">
    <property type="entry name" value="Transmembrane di-heme cytochromes"/>
    <property type="match status" value="1"/>
</dbReference>
<dbReference type="PROSITE" id="PS51003">
    <property type="entry name" value="CYTB_CTER"/>
    <property type="match status" value="1"/>
</dbReference>
<dbReference type="PROSITE" id="PS51002">
    <property type="entry name" value="CYTB_NTER"/>
    <property type="match status" value="1"/>
</dbReference>
<organism>
    <name type="scientific">Cephalorhynchus heavisidii</name>
    <name type="common">Heaviside's dolphin</name>
    <dbReference type="NCBI Taxonomy" id="103583"/>
    <lineage>
        <taxon>Eukaryota</taxon>
        <taxon>Metazoa</taxon>
        <taxon>Chordata</taxon>
        <taxon>Craniata</taxon>
        <taxon>Vertebrata</taxon>
        <taxon>Euteleostomi</taxon>
        <taxon>Mammalia</taxon>
        <taxon>Eutheria</taxon>
        <taxon>Laurasiatheria</taxon>
        <taxon>Artiodactyla</taxon>
        <taxon>Whippomorpha</taxon>
        <taxon>Cetacea</taxon>
        <taxon>Odontoceti</taxon>
        <taxon>Delphinidae</taxon>
        <taxon>Cephalorhynchus</taxon>
    </lineage>
</organism>
<gene>
    <name type="primary">MT-CYB</name>
    <name type="synonym">COB</name>
    <name type="synonym">CYTB</name>
    <name type="synonym">MTCYB</name>
</gene>
<evidence type="ECO:0000250" key="1"/>
<evidence type="ECO:0000250" key="2">
    <source>
        <dbReference type="UniProtKB" id="P00157"/>
    </source>
</evidence>
<evidence type="ECO:0000255" key="3">
    <source>
        <dbReference type="PROSITE-ProRule" id="PRU00967"/>
    </source>
</evidence>
<evidence type="ECO:0000255" key="4">
    <source>
        <dbReference type="PROSITE-ProRule" id="PRU00968"/>
    </source>
</evidence>
<geneLocation type="mitochondrion"/>
<feature type="chain" id="PRO_0000060748" description="Cytochrome b">
    <location>
        <begin position="1"/>
        <end position="379"/>
    </location>
</feature>
<feature type="transmembrane region" description="Helical" evidence="2">
    <location>
        <begin position="33"/>
        <end position="53"/>
    </location>
</feature>
<feature type="transmembrane region" description="Helical" evidence="2">
    <location>
        <begin position="77"/>
        <end position="98"/>
    </location>
</feature>
<feature type="transmembrane region" description="Helical" evidence="2">
    <location>
        <begin position="113"/>
        <end position="133"/>
    </location>
</feature>
<feature type="transmembrane region" description="Helical" evidence="2">
    <location>
        <begin position="178"/>
        <end position="198"/>
    </location>
</feature>
<feature type="transmembrane region" description="Helical" evidence="2">
    <location>
        <begin position="226"/>
        <end position="246"/>
    </location>
</feature>
<feature type="transmembrane region" description="Helical" evidence="2">
    <location>
        <begin position="288"/>
        <end position="308"/>
    </location>
</feature>
<feature type="transmembrane region" description="Helical" evidence="2">
    <location>
        <begin position="320"/>
        <end position="340"/>
    </location>
</feature>
<feature type="transmembrane region" description="Helical" evidence="2">
    <location>
        <begin position="347"/>
        <end position="367"/>
    </location>
</feature>
<feature type="binding site" description="axial binding residue" evidence="2">
    <location>
        <position position="83"/>
    </location>
    <ligand>
        <name>heme b</name>
        <dbReference type="ChEBI" id="CHEBI:60344"/>
        <label>b562</label>
    </ligand>
    <ligandPart>
        <name>Fe</name>
        <dbReference type="ChEBI" id="CHEBI:18248"/>
    </ligandPart>
</feature>
<feature type="binding site" description="axial binding residue" evidence="2">
    <location>
        <position position="97"/>
    </location>
    <ligand>
        <name>heme b</name>
        <dbReference type="ChEBI" id="CHEBI:60344"/>
        <label>b566</label>
    </ligand>
    <ligandPart>
        <name>Fe</name>
        <dbReference type="ChEBI" id="CHEBI:18248"/>
    </ligandPart>
</feature>
<feature type="binding site" description="axial binding residue" evidence="2">
    <location>
        <position position="182"/>
    </location>
    <ligand>
        <name>heme b</name>
        <dbReference type="ChEBI" id="CHEBI:60344"/>
        <label>b562</label>
    </ligand>
    <ligandPart>
        <name>Fe</name>
        <dbReference type="ChEBI" id="CHEBI:18248"/>
    </ligandPart>
</feature>
<feature type="binding site" description="axial binding residue" evidence="2">
    <location>
        <position position="196"/>
    </location>
    <ligand>
        <name>heme b</name>
        <dbReference type="ChEBI" id="CHEBI:60344"/>
        <label>b566</label>
    </ligand>
    <ligandPart>
        <name>Fe</name>
        <dbReference type="ChEBI" id="CHEBI:18248"/>
    </ligandPart>
</feature>
<feature type="binding site" evidence="2">
    <location>
        <position position="201"/>
    </location>
    <ligand>
        <name>a ubiquinone</name>
        <dbReference type="ChEBI" id="CHEBI:16389"/>
    </ligand>
</feature>
<sequence length="379" mass="42790">MINIRKTHPLMKILNDAFIDLPTPSNISSWWNFGSLLGLCLIMQILTGLFLAMHYTPDTSTAFSSVAHICRDVNYGWFIRYLHANGASMFFICLYAHIGRGLYYGSYMFQETWNIGVLLLLTVMATAFVGYVLPWGQMSFWGATVITNLLSAIPYIGTTLVEWIWGGFSVDKATLTRFFAFHFILPFIITALAAVHLLFLHETGSNNPTGIPSNMDMIPFHPYYTIKDILGALFLILALLALTLFAPDLLGDPDNYTPANPLSTPAHIKPEWYFLFAYAILRSIPNKLGGVLALLLSILILIFIPMLQTSKQRSMMFRPFSQLLFWTLIADLLTLTWIGGQPVEHPYIIVGQLASILYFFLILVLMPTVSLIENKLLKW</sequence>
<keyword id="KW-0249">Electron transport</keyword>
<keyword id="KW-0349">Heme</keyword>
<keyword id="KW-0408">Iron</keyword>
<keyword id="KW-0472">Membrane</keyword>
<keyword id="KW-0479">Metal-binding</keyword>
<keyword id="KW-0496">Mitochondrion</keyword>
<keyword id="KW-0999">Mitochondrion inner membrane</keyword>
<keyword id="KW-0679">Respiratory chain</keyword>
<keyword id="KW-0812">Transmembrane</keyword>
<keyword id="KW-1133">Transmembrane helix</keyword>
<keyword id="KW-0813">Transport</keyword>
<keyword id="KW-0830">Ubiquinone</keyword>
<proteinExistence type="inferred from homology"/>
<protein>
    <recommendedName>
        <fullName>Cytochrome b</fullName>
    </recommendedName>
    <alternativeName>
        <fullName>Complex III subunit 3</fullName>
    </alternativeName>
    <alternativeName>
        <fullName>Complex III subunit III</fullName>
    </alternativeName>
    <alternativeName>
        <fullName>Cytochrome b-c1 complex subunit 3</fullName>
    </alternativeName>
    <alternativeName>
        <fullName>Ubiquinol-cytochrome-c reductase complex cytochrome b subunit</fullName>
    </alternativeName>
</protein>